<name>FTSI4_ARATH</name>
<evidence type="ECO:0000255" key="1"/>
<evidence type="ECO:0000269" key="2">
    <source>
    </source>
</evidence>
<evidence type="ECO:0000303" key="3">
    <source>
    </source>
</evidence>
<evidence type="ECO:0000303" key="4">
    <source>
    </source>
</evidence>
<evidence type="ECO:0000303" key="5">
    <source>
    </source>
</evidence>
<evidence type="ECO:0000305" key="6"/>
<evidence type="ECO:0000312" key="7">
    <source>
        <dbReference type="Araport" id="AT5G64580"/>
    </source>
</evidence>
<evidence type="ECO:0000312" key="8">
    <source>
        <dbReference type="EMBL" id="BAB11425.1"/>
    </source>
</evidence>
<evidence type="ECO:0007829" key="9">
    <source>
        <dbReference type="PDB" id="8XKU"/>
    </source>
</evidence>
<evidence type="ECO:0007829" key="10">
    <source>
        <dbReference type="PDB" id="8XKV"/>
    </source>
</evidence>
<proteinExistence type="evidence at protein level"/>
<gene>
    <name evidence="3" type="primary">FTSHI4</name>
    <name evidence="5" type="synonym">EMB3144</name>
    <name evidence="7" type="ordered locus">At5g64580</name>
    <name evidence="8" type="ORF">MUB3.10</name>
</gene>
<comment type="function">
    <text evidence="2 3">Functions in chloroplast biogenesis and chloroplast division. Required for plastid development during embryogenesis (PubMed:24964212). Might be involved in chaperone functions or play a structural role in the thylakoid FtsH complex (PubMed:12185496).</text>
</comment>
<comment type="subunit">
    <text evidence="2">Homooligomer. Interacts with FtsHi2.</text>
</comment>
<comment type="subcellular location">
    <subcellularLocation>
        <location evidence="2">Plastid</location>
        <location evidence="2">Chloroplast thylakoid membrane</location>
        <topology evidence="2">Single-pass membrane protein</topology>
    </subcellularLocation>
</comment>
<comment type="tissue specificity">
    <text evidence="2">Ubiquitous but preferentially expressed in young leaves.</text>
</comment>
<comment type="disruption phenotype">
    <text evidence="2 5">Embryo defective (PubMed:21139083, PubMed:24964212). Impaired plastid biogenesis and thylakoid differentiation in embryo. Defects in the photosystem II protein complex formation (PubMed:24964212).</text>
</comment>
<comment type="similarity">
    <text evidence="6">Belongs to the AAA ATPase family.</text>
</comment>
<comment type="caution">
    <text evidence="4">Lacks the conserved zinc-binding motif HEXXH, which presumably renders it inactive for proteolysis.</text>
</comment>
<comment type="sequence caution" evidence="6">
    <conflict type="erroneous gene model prediction">
        <sequence resource="EMBL-CDS" id="BAB11425"/>
    </conflict>
</comment>
<accession>F4KF14</accession>
<accession>Q8RXW9</accession>
<accession>Q9FLG0</accession>
<organism>
    <name type="scientific">Arabidopsis thaliana</name>
    <name type="common">Mouse-ear cress</name>
    <dbReference type="NCBI Taxonomy" id="3702"/>
    <lineage>
        <taxon>Eukaryota</taxon>
        <taxon>Viridiplantae</taxon>
        <taxon>Streptophyta</taxon>
        <taxon>Embryophyta</taxon>
        <taxon>Tracheophyta</taxon>
        <taxon>Spermatophyta</taxon>
        <taxon>Magnoliopsida</taxon>
        <taxon>eudicotyledons</taxon>
        <taxon>Gunneridae</taxon>
        <taxon>Pentapetalae</taxon>
        <taxon>rosids</taxon>
        <taxon>malvids</taxon>
        <taxon>Brassicales</taxon>
        <taxon>Brassicaceae</taxon>
        <taxon>Camelineae</taxon>
        <taxon>Arabidopsis</taxon>
    </lineage>
</organism>
<sequence>MTFYISSSLTPTHFSKPLNPSNTLFPSQFRGSLSSFVRRRKPTEAKLSSKFNLFPSRRNGLITCCSTSSFESTESSVSQEEDAESNRLFEKLRETERERLSNMEELERKANVQLERQLVMASDWSRTLLTMRGKLKGTEWDPETSHRINFSDFMKLLDSNSVQYMEYSNYGQTISVILPYYKDGEPLGEEEDSKKEIIFRRHIVDRMPIDGWNDVWKKLHQQIVNVEVFNVDVVPAEVYTTVATFVVWSMRLALFVSLYVWIDSITRPIYAKLIPCDLGTPTKKIRQPLKRQALGSLGKSRAKFISAEEKTGVTFDDFAGQEYIKRELQEIVRILKNDEEFQNKGIYCPKGVLLHGPPGTGKTLLAKAIAGEAGLPFFAANGTDFVEMFVGVAASRVKDLFASSRSYAPSIIFIDEIDAIGSKRGGPDIGGGGAEREQGLLQILTEMDGFKVTTSQVLVIGATNRLDILDPALLRKGRFDKIIRVGLPSKDGRLAILKVHARNKFFRSEDEKEELLQEVAENTEDFTGAELQNVLNEAGILTARKDLDYIGREELLEALKRQKGTFETGQEDSTEVPEELKLRLAYREAAVAVLACYLPDQYRPISETDINSIRSQPNMRYSETSGRVFARKSDYVNSIIRACAPRVVEEEMFGIENLCWISAKSTLEASQRAEFLILQTGMTAFGKAYYRNQRDLVPNLVPKLEALRDEYMRFAVEKCSSILQEYQSALEEITDVLLEKGEIKADEIWNIYNTAPRIPQKPVRPVDEYGALIYAGRWGIHGVSLPGRVTFSPGNIGFATFGAPRPMETQIISDDTWKLVDEIWDKKVEEIKAEAVIQIEEEKKKPQILMATHFF</sequence>
<keyword id="KW-0002">3D-structure</keyword>
<keyword id="KW-0067">ATP-binding</keyword>
<keyword id="KW-0150">Chloroplast</keyword>
<keyword id="KW-0378">Hydrolase</keyword>
<keyword id="KW-0472">Membrane</keyword>
<keyword id="KW-0547">Nucleotide-binding</keyword>
<keyword id="KW-0934">Plastid</keyword>
<keyword id="KW-0645">Protease</keyword>
<keyword id="KW-1185">Reference proteome</keyword>
<keyword id="KW-0793">Thylakoid</keyword>
<keyword id="KW-0809">Transit peptide</keyword>
<keyword id="KW-0812">Transmembrane</keyword>
<keyword id="KW-1133">Transmembrane helix</keyword>
<feature type="transit peptide" description="Chloroplast" evidence="1">
    <location>
        <begin position="1"/>
        <end position="78"/>
    </location>
</feature>
<feature type="chain" id="PRO_0000434643" description="Probable inactive ATP-dependent zinc metalloprotease FTSHI 4, chloroplastic">
    <location>
        <begin position="79"/>
        <end position="855"/>
    </location>
</feature>
<feature type="transmembrane region" description="Helical" evidence="1">
    <location>
        <begin position="242"/>
        <end position="262"/>
    </location>
</feature>
<feature type="binding site" evidence="1">
    <location>
        <begin position="356"/>
        <end position="363"/>
    </location>
    <ligand>
        <name>ATP</name>
        <dbReference type="ChEBI" id="CHEBI:30616"/>
    </ligand>
</feature>
<feature type="sequence conflict" description="In Ref. 3; AAL85979." evidence="6" ref="3">
    <original>LR</original>
    <variation>FI</variation>
    <location>
        <begin position="582"/>
        <end position="583"/>
    </location>
</feature>
<feature type="helix" evidence="9">
    <location>
        <begin position="92"/>
        <end position="129"/>
    </location>
</feature>
<feature type="turn" evidence="9">
    <location>
        <begin position="130"/>
        <end position="135"/>
    </location>
</feature>
<feature type="strand" evidence="9">
    <location>
        <begin position="138"/>
        <end position="141"/>
    </location>
</feature>
<feature type="helix" evidence="9">
    <location>
        <begin position="150"/>
        <end position="158"/>
    </location>
</feature>
<feature type="strand" evidence="9">
    <location>
        <begin position="164"/>
        <end position="168"/>
    </location>
</feature>
<feature type="turn" evidence="9">
    <location>
        <begin position="169"/>
        <end position="172"/>
    </location>
</feature>
<feature type="strand" evidence="9">
    <location>
        <begin position="173"/>
        <end position="181"/>
    </location>
</feature>
<feature type="strand" evidence="9">
    <location>
        <begin position="197"/>
        <end position="204"/>
    </location>
</feature>
<feature type="helix" evidence="9">
    <location>
        <begin position="212"/>
        <end position="222"/>
    </location>
</feature>
<feature type="strand" evidence="9">
    <location>
        <begin position="224"/>
        <end position="228"/>
    </location>
</feature>
<feature type="helix" evidence="9">
    <location>
        <begin position="234"/>
        <end position="269"/>
    </location>
</feature>
<feature type="strand" evidence="9">
    <location>
        <begin position="296"/>
        <end position="301"/>
    </location>
</feature>
<feature type="strand" evidence="9">
    <location>
        <begin position="306"/>
        <end position="309"/>
    </location>
</feature>
<feature type="turn" evidence="9">
    <location>
        <begin position="315"/>
        <end position="317"/>
    </location>
</feature>
<feature type="helix" evidence="9">
    <location>
        <begin position="322"/>
        <end position="336"/>
    </location>
</feature>
<feature type="helix" evidence="9">
    <location>
        <begin position="338"/>
        <end position="342"/>
    </location>
</feature>
<feature type="turn" evidence="9">
    <location>
        <begin position="343"/>
        <end position="345"/>
    </location>
</feature>
<feature type="strand" evidence="9">
    <location>
        <begin position="350"/>
        <end position="355"/>
    </location>
</feature>
<feature type="helix" evidence="9">
    <location>
        <begin position="362"/>
        <end position="373"/>
    </location>
</feature>
<feature type="strand" evidence="9">
    <location>
        <begin position="377"/>
        <end position="381"/>
    </location>
</feature>
<feature type="helix" evidence="9">
    <location>
        <begin position="382"/>
        <end position="384"/>
    </location>
</feature>
<feature type="helix" evidence="9">
    <location>
        <begin position="392"/>
        <end position="406"/>
    </location>
</feature>
<feature type="strand" evidence="9">
    <location>
        <begin position="409"/>
        <end position="415"/>
    </location>
</feature>
<feature type="turn" evidence="9">
    <location>
        <begin position="417"/>
        <end position="421"/>
    </location>
</feature>
<feature type="strand" evidence="9">
    <location>
        <begin position="429"/>
        <end position="431"/>
    </location>
</feature>
<feature type="helix" evidence="9">
    <location>
        <begin position="432"/>
        <end position="448"/>
    </location>
</feature>
<feature type="turn" evidence="9">
    <location>
        <begin position="452"/>
        <end position="454"/>
    </location>
</feature>
<feature type="strand" evidence="9">
    <location>
        <begin position="457"/>
        <end position="462"/>
    </location>
</feature>
<feature type="turn" evidence="9">
    <location>
        <begin position="471"/>
        <end position="474"/>
    </location>
</feature>
<feature type="turn" evidence="9">
    <location>
        <begin position="476"/>
        <end position="478"/>
    </location>
</feature>
<feature type="strand" evidence="9">
    <location>
        <begin position="481"/>
        <end position="484"/>
    </location>
</feature>
<feature type="helix" evidence="9">
    <location>
        <begin position="490"/>
        <end position="500"/>
    </location>
</feature>
<feature type="strand" evidence="9">
    <location>
        <begin position="502"/>
        <end position="504"/>
    </location>
</feature>
<feature type="helix" evidence="9">
    <location>
        <begin position="509"/>
        <end position="521"/>
    </location>
</feature>
<feature type="helix" evidence="9">
    <location>
        <begin position="528"/>
        <end position="544"/>
    </location>
</feature>
<feature type="helix" evidence="9">
    <location>
        <begin position="552"/>
        <end position="562"/>
    </location>
</feature>
<feature type="helix" evidence="9">
    <location>
        <begin position="578"/>
        <end position="597"/>
    </location>
</feature>
<feature type="strand" evidence="9">
    <location>
        <begin position="605"/>
        <end position="609"/>
    </location>
</feature>
<feature type="strand" evidence="10">
    <location>
        <begin position="619"/>
        <end position="621"/>
    </location>
</feature>
<feature type="helix" evidence="9">
    <location>
        <begin position="632"/>
        <end position="642"/>
    </location>
</feature>
<feature type="helix" evidence="9">
    <location>
        <begin position="644"/>
        <end position="652"/>
    </location>
</feature>
<feature type="helix" evidence="9">
    <location>
        <begin position="655"/>
        <end position="657"/>
    </location>
</feature>
<feature type="helix" evidence="9">
    <location>
        <begin position="660"/>
        <end position="663"/>
    </location>
</feature>
<feature type="helix" evidence="9">
    <location>
        <begin position="666"/>
        <end position="678"/>
    </location>
</feature>
<feature type="turn" evidence="9">
    <location>
        <begin position="692"/>
        <end position="694"/>
    </location>
</feature>
<feature type="helix" evidence="9">
    <location>
        <begin position="700"/>
        <end position="725"/>
    </location>
</feature>
<feature type="helix" evidence="9">
    <location>
        <begin position="727"/>
        <end position="740"/>
    </location>
</feature>
<feature type="strand" evidence="9">
    <location>
        <begin position="741"/>
        <end position="744"/>
    </location>
</feature>
<feature type="helix" evidence="9">
    <location>
        <begin position="745"/>
        <end position="754"/>
    </location>
</feature>
<feature type="helix" evidence="9">
    <location>
        <begin position="769"/>
        <end position="772"/>
    </location>
</feature>
<feature type="strand" evidence="9">
    <location>
        <begin position="776"/>
        <end position="778"/>
    </location>
</feature>
<feature type="turn" evidence="9">
    <location>
        <begin position="779"/>
        <end position="782"/>
    </location>
</feature>
<feature type="strand" evidence="9">
    <location>
        <begin position="788"/>
        <end position="790"/>
    </location>
</feature>
<feature type="strand" evidence="9">
    <location>
        <begin position="792"/>
        <end position="795"/>
    </location>
</feature>
<feature type="strand" evidence="9">
    <location>
        <begin position="798"/>
        <end position="803"/>
    </location>
</feature>
<feature type="helix" evidence="9">
    <location>
        <begin position="815"/>
        <end position="836"/>
    </location>
</feature>
<feature type="helix" evidence="9">
    <location>
        <begin position="851"/>
        <end position="854"/>
    </location>
</feature>
<reference key="1">
    <citation type="journal article" date="1998" name="DNA Res.">
        <title>Structural analysis of Arabidopsis thaliana chromosome 5. IV. Sequence features of the regions of 1,456,315 bp covered by nineteen physically assigned P1 and TAC clones.</title>
        <authorList>
            <person name="Sato S."/>
            <person name="Kaneko T."/>
            <person name="Kotani H."/>
            <person name="Nakamura Y."/>
            <person name="Asamizu E."/>
            <person name="Miyajima N."/>
            <person name="Tabata S."/>
        </authorList>
    </citation>
    <scope>NUCLEOTIDE SEQUENCE [LARGE SCALE GENOMIC DNA]</scope>
    <source>
        <strain>cv. Columbia</strain>
    </source>
</reference>
<reference key="2">
    <citation type="journal article" date="2017" name="Plant J.">
        <title>Araport11: a complete reannotation of the Arabidopsis thaliana reference genome.</title>
        <authorList>
            <person name="Cheng C.Y."/>
            <person name="Krishnakumar V."/>
            <person name="Chan A.P."/>
            <person name="Thibaud-Nissen F."/>
            <person name="Schobel S."/>
            <person name="Town C.D."/>
        </authorList>
    </citation>
    <scope>GENOME REANNOTATION</scope>
    <source>
        <strain>cv. Columbia</strain>
    </source>
</reference>
<reference key="3">
    <citation type="journal article" date="2003" name="Science">
        <title>Empirical analysis of transcriptional activity in the Arabidopsis genome.</title>
        <authorList>
            <person name="Yamada K."/>
            <person name="Lim J."/>
            <person name="Dale J.M."/>
            <person name="Chen H."/>
            <person name="Shinn P."/>
            <person name="Palm C.J."/>
            <person name="Southwick A.M."/>
            <person name="Wu H.C."/>
            <person name="Kim C.J."/>
            <person name="Nguyen M."/>
            <person name="Pham P.K."/>
            <person name="Cheuk R.F."/>
            <person name="Karlin-Newmann G."/>
            <person name="Liu S.X."/>
            <person name="Lam B."/>
            <person name="Sakano H."/>
            <person name="Wu T."/>
            <person name="Yu G."/>
            <person name="Miranda M."/>
            <person name="Quach H.L."/>
            <person name="Tripp M."/>
            <person name="Chang C.H."/>
            <person name="Lee J.M."/>
            <person name="Toriumi M.J."/>
            <person name="Chan M.M."/>
            <person name="Tang C.C."/>
            <person name="Onodera C.S."/>
            <person name="Deng J.M."/>
            <person name="Akiyama K."/>
            <person name="Ansari Y."/>
            <person name="Arakawa T."/>
            <person name="Banh J."/>
            <person name="Banno F."/>
            <person name="Bowser L."/>
            <person name="Brooks S.Y."/>
            <person name="Carninci P."/>
            <person name="Chao Q."/>
            <person name="Choy N."/>
            <person name="Enju A."/>
            <person name="Goldsmith A.D."/>
            <person name="Gurjal M."/>
            <person name="Hansen N.F."/>
            <person name="Hayashizaki Y."/>
            <person name="Johnson-Hopson C."/>
            <person name="Hsuan V.W."/>
            <person name="Iida K."/>
            <person name="Karnes M."/>
            <person name="Khan S."/>
            <person name="Koesema E."/>
            <person name="Ishida J."/>
            <person name="Jiang P.X."/>
            <person name="Jones T."/>
            <person name="Kawai J."/>
            <person name="Kamiya A."/>
            <person name="Meyers C."/>
            <person name="Nakajima M."/>
            <person name="Narusaka M."/>
            <person name="Seki M."/>
            <person name="Sakurai T."/>
            <person name="Satou M."/>
            <person name="Tamse R."/>
            <person name="Vaysberg M."/>
            <person name="Wallender E.K."/>
            <person name="Wong C."/>
            <person name="Yamamura Y."/>
            <person name="Yuan S."/>
            <person name="Shinozaki K."/>
            <person name="Davis R.W."/>
            <person name="Theologis A."/>
            <person name="Ecker J.R."/>
        </authorList>
    </citation>
    <scope>NUCLEOTIDE SEQUENCE [LARGE SCALE MRNA] OF 517-855</scope>
    <source>
        <strain>cv. Columbia</strain>
    </source>
</reference>
<reference key="4">
    <citation type="journal article" date="2002" name="Curr. Genet.">
        <title>The gene complement for proteolysis in the cyanobacterium Synechocystis sp. PCC 6803 and Arabidopsis thaliana chloroplasts.</title>
        <authorList>
            <person name="Sokolenko A."/>
            <person name="Pojidaeva E."/>
            <person name="Zinchenko V."/>
            <person name="Panichkin V."/>
            <person name="Glaser V.M."/>
            <person name="Herrmann R.G."/>
            <person name="Shestakov S.V."/>
        </authorList>
    </citation>
    <scope>IDENTIFICATION</scope>
    <scope>NOMENCLATURE</scope>
</reference>
<reference key="5">
    <citation type="journal article" date="2004" name="Plant J.">
        <title>The Arabidopsis FtsH metalloprotease gene family: interchangeability of subunits in chloroplast oligomeric complexes.</title>
        <authorList>
            <person name="Yu F."/>
            <person name="Park S."/>
            <person name="Rodermel S.R."/>
        </authorList>
    </citation>
    <scope>IDENTIFICATION</scope>
</reference>
<reference key="6">
    <citation type="journal article" date="2011" name="Plant Physiol.">
        <title>Identification of nuclear genes encoding chloroplast-localized proteins required for embryo development in Arabidopsis.</title>
        <authorList>
            <person name="Bryant N."/>
            <person name="Lloyd J."/>
            <person name="Sweeney C."/>
            <person name="Myouga F."/>
            <person name="Meinke D."/>
        </authorList>
    </citation>
    <scope>IDENTIFICATION</scope>
    <scope>DISRUPTION PHENOTYPE</scope>
</reference>
<reference key="7">
    <citation type="journal article" date="2012" name="Physiol. Plantarum">
        <title>FtsH proteases located in the plant chloroplast.</title>
        <authorList>
            <person name="Wagner R."/>
            <person name="Aigner H."/>
            <person name="Funk C."/>
        </authorList>
    </citation>
    <scope>GENE FAMILY</scope>
    <scope>REVIEW</scope>
</reference>
<reference key="8">
    <citation type="journal article" date="2014" name="PLoS ONE">
        <title>FtsHi4 is essential for embryogenesis due to its influence on chloroplast development in Arabidopsis.</title>
        <authorList>
            <person name="Lu X."/>
            <person name="Zhang D."/>
            <person name="Li S."/>
            <person name="Su Y."/>
            <person name="Liang Q."/>
            <person name="Meng H."/>
            <person name="Shen S."/>
            <person name="Fan Y."/>
            <person name="Liu C."/>
            <person name="Zhang C."/>
        </authorList>
    </citation>
    <scope>DISRUPTION PHENOTYPE</scope>
    <scope>FUNCTION</scope>
    <scope>SUBCELLULAR LOCATION</scope>
    <scope>TISSUE SPECIFICITY</scope>
    <scope>INTERACTION WITH FTSI2</scope>
    <scope>SUBUNIT</scope>
</reference>
<dbReference type="EMBL" id="AB010076">
    <property type="protein sequence ID" value="BAB11425.1"/>
    <property type="status" value="ALT_SEQ"/>
    <property type="molecule type" value="Genomic_DNA"/>
</dbReference>
<dbReference type="EMBL" id="CP002688">
    <property type="protein sequence ID" value="AED97923.1"/>
    <property type="molecule type" value="Genomic_DNA"/>
</dbReference>
<dbReference type="EMBL" id="AY080633">
    <property type="protein sequence ID" value="AAL85979.1"/>
    <property type="molecule type" value="mRNA"/>
</dbReference>
<dbReference type="RefSeq" id="NP_201263.2">
    <property type="nucleotide sequence ID" value="NM_125854.4"/>
</dbReference>
<dbReference type="PDB" id="8XKU">
    <property type="method" value="EM"/>
    <property type="resolution" value="3.20 A"/>
    <property type="chains" value="A=1-855"/>
</dbReference>
<dbReference type="PDB" id="8XKV">
    <property type="method" value="EM"/>
    <property type="resolution" value="3.30 A"/>
    <property type="chains" value="A=1-855"/>
</dbReference>
<dbReference type="PDBsum" id="8XKU"/>
<dbReference type="PDBsum" id="8XKV"/>
<dbReference type="EMDB" id="EMD-38425"/>
<dbReference type="EMDB" id="EMD-38428"/>
<dbReference type="SMR" id="F4KF14"/>
<dbReference type="FunCoup" id="F4KF14">
    <property type="interactions" value="915"/>
</dbReference>
<dbReference type="IntAct" id="F4KF14">
    <property type="interactions" value="1"/>
</dbReference>
<dbReference type="STRING" id="3702.F4KF14"/>
<dbReference type="PaxDb" id="3702-AT5G64580.1"/>
<dbReference type="ProMEX" id="F4KF14"/>
<dbReference type="ProteomicsDB" id="230536"/>
<dbReference type="EnsemblPlants" id="AT5G64580.1">
    <property type="protein sequence ID" value="AT5G64580.1"/>
    <property type="gene ID" value="AT5G64580"/>
</dbReference>
<dbReference type="GeneID" id="836579"/>
<dbReference type="Gramene" id="AT5G64580.1">
    <property type="protein sequence ID" value="AT5G64580.1"/>
    <property type="gene ID" value="AT5G64580"/>
</dbReference>
<dbReference type="KEGG" id="ath:AT5G64580"/>
<dbReference type="Araport" id="AT5G64580"/>
<dbReference type="TAIR" id="AT5G64580">
    <property type="gene designation" value="EMB3144"/>
</dbReference>
<dbReference type="eggNOG" id="KOG0731">
    <property type="taxonomic scope" value="Eukaryota"/>
</dbReference>
<dbReference type="HOGENOM" id="CLU_000688_19_0_1"/>
<dbReference type="InParanoid" id="F4KF14"/>
<dbReference type="OMA" id="YPNPHRP"/>
<dbReference type="PRO" id="PR:F4KF14"/>
<dbReference type="Proteomes" id="UP000006548">
    <property type="component" value="Chromosome 5"/>
</dbReference>
<dbReference type="ExpressionAtlas" id="F4KF14">
    <property type="expression patterns" value="baseline and differential"/>
</dbReference>
<dbReference type="GO" id="GO:0009507">
    <property type="term" value="C:chloroplast"/>
    <property type="evidence" value="ECO:0007005"/>
    <property type="project" value="TAIR"/>
</dbReference>
<dbReference type="GO" id="GO:0009941">
    <property type="term" value="C:chloroplast envelope"/>
    <property type="evidence" value="ECO:0007005"/>
    <property type="project" value="TAIR"/>
</dbReference>
<dbReference type="GO" id="GO:0009706">
    <property type="term" value="C:chloroplast inner membrane"/>
    <property type="evidence" value="ECO:0000314"/>
    <property type="project" value="TAIR"/>
</dbReference>
<dbReference type="GO" id="GO:0009535">
    <property type="term" value="C:chloroplast thylakoid membrane"/>
    <property type="evidence" value="ECO:0000314"/>
    <property type="project" value="UniProtKB"/>
</dbReference>
<dbReference type="GO" id="GO:0009536">
    <property type="term" value="C:plastid"/>
    <property type="evidence" value="ECO:0007005"/>
    <property type="project" value="TAIR"/>
</dbReference>
<dbReference type="GO" id="GO:0062091">
    <property type="term" value="C:Ycf2/FtsHi complex"/>
    <property type="evidence" value="ECO:0000314"/>
    <property type="project" value="TAIR"/>
</dbReference>
<dbReference type="GO" id="GO:0005524">
    <property type="term" value="F:ATP binding"/>
    <property type="evidence" value="ECO:0007669"/>
    <property type="project" value="UniProtKB-KW"/>
</dbReference>
<dbReference type="GO" id="GO:0016887">
    <property type="term" value="F:ATP hydrolysis activity"/>
    <property type="evidence" value="ECO:0007669"/>
    <property type="project" value="InterPro"/>
</dbReference>
<dbReference type="GO" id="GO:0004176">
    <property type="term" value="F:ATP-dependent peptidase activity"/>
    <property type="evidence" value="ECO:0007669"/>
    <property type="project" value="InterPro"/>
</dbReference>
<dbReference type="GO" id="GO:0016464">
    <property type="term" value="F:chloroplast protein-transporting ATPase activity"/>
    <property type="evidence" value="ECO:0000314"/>
    <property type="project" value="TAIR"/>
</dbReference>
<dbReference type="GO" id="GO:0004222">
    <property type="term" value="F:metalloendopeptidase activity"/>
    <property type="evidence" value="ECO:0007669"/>
    <property type="project" value="InterPro"/>
</dbReference>
<dbReference type="GO" id="GO:0009793">
    <property type="term" value="P:embryo development ending in seed dormancy"/>
    <property type="evidence" value="ECO:0000315"/>
    <property type="project" value="UniProtKB"/>
</dbReference>
<dbReference type="GO" id="GO:0045037">
    <property type="term" value="P:protein import into chloroplast stroma"/>
    <property type="evidence" value="ECO:0000314"/>
    <property type="project" value="TAIR"/>
</dbReference>
<dbReference type="GO" id="GO:0006508">
    <property type="term" value="P:proteolysis"/>
    <property type="evidence" value="ECO:0007669"/>
    <property type="project" value="UniProtKB-KW"/>
</dbReference>
<dbReference type="FunFam" id="3.40.50.300:FF:000352">
    <property type="entry name" value="ATP-dependent zinc metalloprotease FTSH 7, chloroplastic"/>
    <property type="match status" value="1"/>
</dbReference>
<dbReference type="FunFam" id="1.10.8.60:FF:000061">
    <property type="entry name" value="Probable inactive ATP-dependent zinc metalloprotease FTSHI 4, chloroplastic"/>
    <property type="match status" value="1"/>
</dbReference>
<dbReference type="FunFam" id="1.20.58.760:FF:000013">
    <property type="entry name" value="Probable inactive ATP-dependent zinc metalloprotease FTSHI 4, chloroplastic"/>
    <property type="match status" value="1"/>
</dbReference>
<dbReference type="Gene3D" id="1.10.8.60">
    <property type="match status" value="1"/>
</dbReference>
<dbReference type="Gene3D" id="3.40.50.300">
    <property type="entry name" value="P-loop containing nucleotide triphosphate hydrolases"/>
    <property type="match status" value="1"/>
</dbReference>
<dbReference type="Gene3D" id="1.20.58.760">
    <property type="entry name" value="Peptidase M41"/>
    <property type="match status" value="1"/>
</dbReference>
<dbReference type="InterPro" id="IPR003593">
    <property type="entry name" value="AAA+_ATPase"/>
</dbReference>
<dbReference type="InterPro" id="IPR041569">
    <property type="entry name" value="AAA_lid_3"/>
</dbReference>
<dbReference type="InterPro" id="IPR003959">
    <property type="entry name" value="ATPase_AAA_core"/>
</dbReference>
<dbReference type="InterPro" id="IPR003960">
    <property type="entry name" value="ATPase_AAA_CS"/>
</dbReference>
<dbReference type="InterPro" id="IPR027417">
    <property type="entry name" value="P-loop_NTPase"/>
</dbReference>
<dbReference type="InterPro" id="IPR037219">
    <property type="entry name" value="Peptidase_M41-like"/>
</dbReference>
<dbReference type="PANTHER" id="PTHR23076:SF99">
    <property type="entry name" value="INACTIVE ATP-DEPENDENT ZINC METALLOPROTEASE FTSHI 4, CHLOROPLASTIC-RELATED"/>
    <property type="match status" value="1"/>
</dbReference>
<dbReference type="PANTHER" id="PTHR23076">
    <property type="entry name" value="METALLOPROTEASE M41 FTSH"/>
    <property type="match status" value="1"/>
</dbReference>
<dbReference type="Pfam" id="PF00004">
    <property type="entry name" value="AAA"/>
    <property type="match status" value="1"/>
</dbReference>
<dbReference type="Pfam" id="PF17862">
    <property type="entry name" value="AAA_lid_3"/>
    <property type="match status" value="1"/>
</dbReference>
<dbReference type="SMART" id="SM00382">
    <property type="entry name" value="AAA"/>
    <property type="match status" value="1"/>
</dbReference>
<dbReference type="SUPFAM" id="SSF140990">
    <property type="entry name" value="FtsH protease domain-like"/>
    <property type="match status" value="1"/>
</dbReference>
<dbReference type="SUPFAM" id="SSF52540">
    <property type="entry name" value="P-loop containing nucleoside triphosphate hydrolases"/>
    <property type="match status" value="1"/>
</dbReference>
<dbReference type="PROSITE" id="PS00674">
    <property type="entry name" value="AAA"/>
    <property type="match status" value="1"/>
</dbReference>
<protein>
    <recommendedName>
        <fullName>Probable inactive ATP-dependent zinc metalloprotease FTSHI 4, chloroplastic</fullName>
        <shortName evidence="3">AtFTSHI4</shortName>
    </recommendedName>
    <alternativeName>
        <fullName evidence="5">Protein EMBRYO DEFECTIVE 3144</fullName>
    </alternativeName>
    <alternativeName>
        <fullName evidence="3">Protein FTSH INACTIVE PROTEASE 4</fullName>
    </alternativeName>
</protein>